<reference key="1">
    <citation type="journal article" date="1998" name="Nature">
        <title>Deciphering the biology of Mycobacterium tuberculosis from the complete genome sequence.</title>
        <authorList>
            <person name="Cole S.T."/>
            <person name="Brosch R."/>
            <person name="Parkhill J."/>
            <person name="Garnier T."/>
            <person name="Churcher C.M."/>
            <person name="Harris D.E."/>
            <person name="Gordon S.V."/>
            <person name="Eiglmeier K."/>
            <person name="Gas S."/>
            <person name="Barry C.E. III"/>
            <person name="Tekaia F."/>
            <person name="Badcock K."/>
            <person name="Basham D."/>
            <person name="Brown D."/>
            <person name="Chillingworth T."/>
            <person name="Connor R."/>
            <person name="Davies R.M."/>
            <person name="Devlin K."/>
            <person name="Feltwell T."/>
            <person name="Gentles S."/>
            <person name="Hamlin N."/>
            <person name="Holroyd S."/>
            <person name="Hornsby T."/>
            <person name="Jagels K."/>
            <person name="Krogh A."/>
            <person name="McLean J."/>
            <person name="Moule S."/>
            <person name="Murphy L.D."/>
            <person name="Oliver S."/>
            <person name="Osborne J."/>
            <person name="Quail M.A."/>
            <person name="Rajandream M.A."/>
            <person name="Rogers J."/>
            <person name="Rutter S."/>
            <person name="Seeger K."/>
            <person name="Skelton S."/>
            <person name="Squares S."/>
            <person name="Squares R."/>
            <person name="Sulston J.E."/>
            <person name="Taylor K."/>
            <person name="Whitehead S."/>
            <person name="Barrell B.G."/>
        </authorList>
    </citation>
    <scope>NUCLEOTIDE SEQUENCE [LARGE SCALE GENOMIC DNA]</scope>
    <source>
        <strain>ATCC 25618 / H37Rv</strain>
    </source>
</reference>
<reference key="2">
    <citation type="journal article" date="2011" name="Mol. Cell. Proteomics">
        <title>Proteogenomic analysis of Mycobacterium tuberculosis by high resolution mass spectrometry.</title>
        <authorList>
            <person name="Kelkar D.S."/>
            <person name="Kumar D."/>
            <person name="Kumar P."/>
            <person name="Balakrishnan L."/>
            <person name="Muthusamy B."/>
            <person name="Yadav A.K."/>
            <person name="Shrivastava P."/>
            <person name="Marimuthu A."/>
            <person name="Anand S."/>
            <person name="Sundaram H."/>
            <person name="Kingsbury R."/>
            <person name="Harsha H.C."/>
            <person name="Nair B."/>
            <person name="Prasad T.S."/>
            <person name="Chauhan D.S."/>
            <person name="Katoch K."/>
            <person name="Katoch V.M."/>
            <person name="Kumar P."/>
            <person name="Chaerkady R."/>
            <person name="Ramachandran S."/>
            <person name="Dash D."/>
            <person name="Pandey A."/>
        </authorList>
    </citation>
    <scope>IDENTIFICATION BY MASS SPECTROMETRY [LARGE SCALE ANALYSIS]</scope>
    <source>
        <strain>ATCC 25618 / H37Rv</strain>
    </source>
</reference>
<comment type="function">
    <text evidence="1">Converts molybdopterin precursor Z into molybdopterin. This requires the incorporation of two sulfur atoms into precursor Z to generate a dithiolene group. The sulfur is provided by MoaD (By similarity).</text>
</comment>
<comment type="catalytic activity">
    <reaction>
        <text>2 [molybdopterin-synthase sulfur-carrier protein]-C-terminal-Gly-aminoethanethioate + cyclic pyranopterin phosphate + H2O = molybdopterin + 2 [molybdopterin-synthase sulfur-carrier protein]-C-terminal Gly-Gly + 2 H(+)</text>
        <dbReference type="Rhea" id="RHEA:26333"/>
        <dbReference type="Rhea" id="RHEA-COMP:12202"/>
        <dbReference type="Rhea" id="RHEA-COMP:19907"/>
        <dbReference type="ChEBI" id="CHEBI:15377"/>
        <dbReference type="ChEBI" id="CHEBI:15378"/>
        <dbReference type="ChEBI" id="CHEBI:58698"/>
        <dbReference type="ChEBI" id="CHEBI:59648"/>
        <dbReference type="ChEBI" id="CHEBI:90778"/>
        <dbReference type="ChEBI" id="CHEBI:232372"/>
        <dbReference type="EC" id="2.8.1.12"/>
    </reaction>
</comment>
<comment type="pathway">
    <text>Cofactor biosynthesis; molybdopterin biosynthesis.</text>
</comment>
<comment type="subunit">
    <text evidence="1">Heterotetramer of 2 MoaD subunits and 2 MoaE subunits. Also stable as homodimer. The enzyme changes between these two forms during catalysis (By similarity).</text>
</comment>
<comment type="similarity">
    <text evidence="2">Belongs to the MoaE family.</text>
</comment>
<keyword id="KW-0002">3D-structure</keyword>
<keyword id="KW-0501">Molybdenum cofactor biosynthesis</keyword>
<keyword id="KW-1185">Reference proteome</keyword>
<keyword id="KW-0808">Transferase</keyword>
<proteinExistence type="evidence at protein level"/>
<evidence type="ECO:0000250" key="1"/>
<evidence type="ECO:0000305" key="2"/>
<evidence type="ECO:0007829" key="3">
    <source>
        <dbReference type="PDB" id="6JBZ"/>
    </source>
</evidence>
<accession>P9WJR1</accession>
<accession>L0T6N7</accession>
<accession>O53878</accession>
<feature type="chain" id="PRO_0000163088" description="Molybdopterin synthase catalytic subunit 2">
    <location>
        <begin position="1"/>
        <end position="141"/>
    </location>
</feature>
<feature type="binding site" evidence="1">
    <location>
        <begin position="37"/>
        <end position="39"/>
    </location>
    <ligand>
        <name>substrate</name>
    </ligand>
</feature>
<feature type="binding site" evidence="1">
    <location>
        <begin position="103"/>
        <end position="104"/>
    </location>
    <ligand>
        <name>substrate</name>
    </ligand>
</feature>
<feature type="binding site" evidence="1">
    <location>
        <position position="119"/>
    </location>
    <ligand>
        <name>substrate</name>
    </ligand>
</feature>
<feature type="binding site" evidence="1">
    <location>
        <begin position="126"/>
        <end position="128"/>
    </location>
    <ligand>
        <name>substrate</name>
    </ligand>
</feature>
<feature type="strand" evidence="3">
    <location>
        <begin position="3"/>
        <end position="12"/>
    </location>
</feature>
<feature type="helix" evidence="3">
    <location>
        <begin position="16"/>
        <end position="23"/>
    </location>
</feature>
<feature type="strand" evidence="3">
    <location>
        <begin position="30"/>
        <end position="37"/>
    </location>
</feature>
<feature type="strand" evidence="3">
    <location>
        <begin position="40"/>
        <end position="42"/>
    </location>
</feature>
<feature type="strand" evidence="3">
    <location>
        <begin position="45"/>
        <end position="54"/>
    </location>
</feature>
<feature type="helix" evidence="3">
    <location>
        <begin position="58"/>
        <end position="71"/>
    </location>
</feature>
<feature type="strand" evidence="3">
    <location>
        <begin position="74"/>
        <end position="84"/>
    </location>
</feature>
<feature type="strand" evidence="3">
    <location>
        <begin position="86"/>
        <end position="89"/>
    </location>
</feature>
<feature type="strand" evidence="3">
    <location>
        <begin position="93"/>
        <end position="103"/>
    </location>
</feature>
<feature type="helix" evidence="3">
    <location>
        <begin position="104"/>
        <end position="121"/>
    </location>
</feature>
<feature type="strand" evidence="3">
    <location>
        <begin position="124"/>
        <end position="130"/>
    </location>
</feature>
<feature type="strand" evidence="3">
    <location>
        <begin position="135"/>
        <end position="137"/>
    </location>
</feature>
<sequence length="141" mass="15048">MTQVLRAALTDQPIFLAEHEELVSHRSAGAIVGFVGMIRDRDGGRGVLRLEYSAHPSAAQVLADLVAEVAEESSGVRAVAASHRIGVLQVGEAALVAAVAADHRRAAFGTCAHLVETIKARLPVWKHQFFEDGTDEWVGSV</sequence>
<gene>
    <name type="primary">moaE2</name>
    <name type="ordered locus">Rv0866</name>
    <name type="ORF">MTV043.59</name>
</gene>
<protein>
    <recommendedName>
        <fullName>Molybdopterin synthase catalytic subunit 2</fullName>
        <ecNumber>2.8.1.12</ecNumber>
    </recommendedName>
    <alternativeName>
        <fullName>MPT synthase subunit 2 2</fullName>
    </alternativeName>
    <alternativeName>
        <fullName>Molybdenum cofactor biosynthesis protein E 2</fullName>
    </alternativeName>
    <alternativeName>
        <fullName>Molybdopterin-converting factor large subunit 2</fullName>
    </alternativeName>
    <alternativeName>
        <fullName>Molybdopterin-converting factor subunit 2 2</fullName>
    </alternativeName>
</protein>
<name>MOAE2_MYCTU</name>
<organism>
    <name type="scientific">Mycobacterium tuberculosis (strain ATCC 25618 / H37Rv)</name>
    <dbReference type="NCBI Taxonomy" id="83332"/>
    <lineage>
        <taxon>Bacteria</taxon>
        <taxon>Bacillati</taxon>
        <taxon>Actinomycetota</taxon>
        <taxon>Actinomycetes</taxon>
        <taxon>Mycobacteriales</taxon>
        <taxon>Mycobacteriaceae</taxon>
        <taxon>Mycobacterium</taxon>
        <taxon>Mycobacterium tuberculosis complex</taxon>
    </lineage>
</organism>
<dbReference type="EC" id="2.8.1.12"/>
<dbReference type="EMBL" id="AL123456">
    <property type="protein sequence ID" value="CCP43614.1"/>
    <property type="molecule type" value="Genomic_DNA"/>
</dbReference>
<dbReference type="PIR" id="B70816">
    <property type="entry name" value="B70816"/>
</dbReference>
<dbReference type="RefSeq" id="NP_215381.1">
    <property type="nucleotide sequence ID" value="NC_000962.3"/>
</dbReference>
<dbReference type="RefSeq" id="WP_003404552.1">
    <property type="nucleotide sequence ID" value="NZ_NVQJ01000040.1"/>
</dbReference>
<dbReference type="PDB" id="6JBZ">
    <property type="method" value="X-ray"/>
    <property type="resolution" value="2.60 A"/>
    <property type="chains" value="A/C=1-141"/>
</dbReference>
<dbReference type="PDBsum" id="6JBZ"/>
<dbReference type="SMR" id="P9WJR1"/>
<dbReference type="FunCoup" id="P9WJR1">
    <property type="interactions" value="132"/>
</dbReference>
<dbReference type="STRING" id="83332.Rv0866"/>
<dbReference type="PaxDb" id="83332-Rv0866"/>
<dbReference type="DNASU" id="885431"/>
<dbReference type="GeneID" id="45424832"/>
<dbReference type="GeneID" id="885431"/>
<dbReference type="KEGG" id="mtu:Rv0866"/>
<dbReference type="KEGG" id="mtv:RVBD_0866"/>
<dbReference type="TubercuList" id="Rv0866"/>
<dbReference type="eggNOG" id="COG0314">
    <property type="taxonomic scope" value="Bacteria"/>
</dbReference>
<dbReference type="InParanoid" id="P9WJR1"/>
<dbReference type="OrthoDB" id="9794429at2"/>
<dbReference type="PhylomeDB" id="P9WJR1"/>
<dbReference type="UniPathway" id="UPA00344"/>
<dbReference type="Proteomes" id="UP000001584">
    <property type="component" value="Chromosome"/>
</dbReference>
<dbReference type="GO" id="GO:0005829">
    <property type="term" value="C:cytosol"/>
    <property type="evidence" value="ECO:0000318"/>
    <property type="project" value="GO_Central"/>
</dbReference>
<dbReference type="GO" id="GO:0030366">
    <property type="term" value="F:molybdopterin synthase activity"/>
    <property type="evidence" value="ECO:0007669"/>
    <property type="project" value="UniProtKB-EC"/>
</dbReference>
<dbReference type="GO" id="GO:0006777">
    <property type="term" value="P:Mo-molybdopterin cofactor biosynthetic process"/>
    <property type="evidence" value="ECO:0000314"/>
    <property type="project" value="MTBBASE"/>
</dbReference>
<dbReference type="CDD" id="cd00756">
    <property type="entry name" value="MoaE"/>
    <property type="match status" value="1"/>
</dbReference>
<dbReference type="Gene3D" id="3.90.1170.40">
    <property type="entry name" value="Molybdopterin biosynthesis MoaE subunit"/>
    <property type="match status" value="1"/>
</dbReference>
<dbReference type="InterPro" id="IPR036563">
    <property type="entry name" value="MoaE_sf"/>
</dbReference>
<dbReference type="InterPro" id="IPR003448">
    <property type="entry name" value="Mopterin_biosynth_MoaE"/>
</dbReference>
<dbReference type="PANTHER" id="PTHR23404">
    <property type="entry name" value="MOLYBDOPTERIN SYNTHASE RELATED"/>
    <property type="match status" value="1"/>
</dbReference>
<dbReference type="Pfam" id="PF02391">
    <property type="entry name" value="MoaE"/>
    <property type="match status" value="1"/>
</dbReference>
<dbReference type="SUPFAM" id="SSF54690">
    <property type="entry name" value="Molybdopterin synthase subunit MoaE"/>
    <property type="match status" value="1"/>
</dbReference>